<evidence type="ECO:0000255" key="1">
    <source>
        <dbReference type="HAMAP-Rule" id="MF_01872"/>
    </source>
</evidence>
<comment type="function">
    <text evidence="1">Specifically methylates the adenine in position 37 of tRNA(1)(Val) (anticodon cmo5UAC).</text>
</comment>
<comment type="catalytic activity">
    <reaction evidence="1">
        <text>adenosine(37) in tRNA1(Val) + S-adenosyl-L-methionine = N(6)-methyladenosine(37) in tRNA1(Val) + S-adenosyl-L-homocysteine + H(+)</text>
        <dbReference type="Rhea" id="RHEA:43160"/>
        <dbReference type="Rhea" id="RHEA-COMP:10369"/>
        <dbReference type="Rhea" id="RHEA-COMP:10370"/>
        <dbReference type="ChEBI" id="CHEBI:15378"/>
        <dbReference type="ChEBI" id="CHEBI:57856"/>
        <dbReference type="ChEBI" id="CHEBI:59789"/>
        <dbReference type="ChEBI" id="CHEBI:74411"/>
        <dbReference type="ChEBI" id="CHEBI:74449"/>
        <dbReference type="EC" id="2.1.1.223"/>
    </reaction>
</comment>
<comment type="subcellular location">
    <subcellularLocation>
        <location evidence="1">Cytoplasm</location>
    </subcellularLocation>
</comment>
<comment type="similarity">
    <text evidence="1">Belongs to the methyltransferase superfamily. tRNA (adenine-N(6)-)-methyltransferase family.</text>
</comment>
<gene>
    <name evidence="1" type="primary">yfiC</name>
    <name type="ordered locus">EcolC_1102</name>
</gene>
<sequence length="245" mass="27270">MSQSTSVLRRNGFTFKQFFVAHDRCAMKVGTDGILLGAWAPVAGVKRCLDIGAGSGLLALMLAQRTDDSVMIDAVELESEAAAQAQENINQSPWAERINVHTADIQQWITQQTVRFDLIISNPPYYQQGVECSTPQREQARYTTTLDHPSLLTCAAECITEEGFFCVVLPEQIGNGFTELALSMGWHLRLRTDVAENEARLPHRVLLAFSPQAGECFSDRLVIRGPDQNYSEAYTALTQAFYLFM</sequence>
<reference key="1">
    <citation type="submission" date="2008-02" db="EMBL/GenBank/DDBJ databases">
        <title>Complete sequence of Escherichia coli C str. ATCC 8739.</title>
        <authorList>
            <person name="Copeland A."/>
            <person name="Lucas S."/>
            <person name="Lapidus A."/>
            <person name="Glavina del Rio T."/>
            <person name="Dalin E."/>
            <person name="Tice H."/>
            <person name="Bruce D."/>
            <person name="Goodwin L."/>
            <person name="Pitluck S."/>
            <person name="Kiss H."/>
            <person name="Brettin T."/>
            <person name="Detter J.C."/>
            <person name="Han C."/>
            <person name="Kuske C.R."/>
            <person name="Schmutz J."/>
            <person name="Larimer F."/>
            <person name="Land M."/>
            <person name="Hauser L."/>
            <person name="Kyrpides N."/>
            <person name="Mikhailova N."/>
            <person name="Ingram L."/>
            <person name="Richardson P."/>
        </authorList>
    </citation>
    <scope>NUCLEOTIDE SEQUENCE [LARGE SCALE GENOMIC DNA]</scope>
    <source>
        <strain>ATCC 8739 / DSM 1576 / NBRC 3972 / NCIMB 8545 / WDCM 00012 / Crooks</strain>
    </source>
</reference>
<name>TRMN6_ECOLC</name>
<dbReference type="EC" id="2.1.1.223" evidence="1"/>
<dbReference type="EMBL" id="CP000946">
    <property type="protein sequence ID" value="ACA76769.1"/>
    <property type="molecule type" value="Genomic_DNA"/>
</dbReference>
<dbReference type="SMR" id="B1IVQ2"/>
<dbReference type="KEGG" id="ecl:EcolC_1102"/>
<dbReference type="HOGENOM" id="CLU_061983_0_0_6"/>
<dbReference type="GO" id="GO:0005737">
    <property type="term" value="C:cytoplasm"/>
    <property type="evidence" value="ECO:0007669"/>
    <property type="project" value="UniProtKB-SubCell"/>
</dbReference>
<dbReference type="GO" id="GO:0003676">
    <property type="term" value="F:nucleic acid binding"/>
    <property type="evidence" value="ECO:0007669"/>
    <property type="project" value="InterPro"/>
</dbReference>
<dbReference type="GO" id="GO:0016430">
    <property type="term" value="F:tRNA (adenine-N6)-methyltransferase activity"/>
    <property type="evidence" value="ECO:0007669"/>
    <property type="project" value="UniProtKB-UniRule"/>
</dbReference>
<dbReference type="GO" id="GO:0032259">
    <property type="term" value="P:methylation"/>
    <property type="evidence" value="ECO:0007669"/>
    <property type="project" value="UniProtKB-KW"/>
</dbReference>
<dbReference type="GO" id="GO:0008033">
    <property type="term" value="P:tRNA processing"/>
    <property type="evidence" value="ECO:0007669"/>
    <property type="project" value="UniProtKB-UniRule"/>
</dbReference>
<dbReference type="CDD" id="cd02440">
    <property type="entry name" value="AdoMet_MTases"/>
    <property type="match status" value="1"/>
</dbReference>
<dbReference type="FunFam" id="3.40.50.150:FF:000087">
    <property type="entry name" value="tRNA1(Val) (adenine(37)-N6)-methyltransferase"/>
    <property type="match status" value="1"/>
</dbReference>
<dbReference type="Gene3D" id="3.40.50.150">
    <property type="entry name" value="Vaccinia Virus protein VP39"/>
    <property type="match status" value="1"/>
</dbReference>
<dbReference type="HAMAP" id="MF_01872">
    <property type="entry name" value="tRNA_methyltr_YfiC"/>
    <property type="match status" value="1"/>
</dbReference>
<dbReference type="InterPro" id="IPR002052">
    <property type="entry name" value="DNA_methylase_N6_adenine_CS"/>
</dbReference>
<dbReference type="InterPro" id="IPR029063">
    <property type="entry name" value="SAM-dependent_MTases_sf"/>
</dbReference>
<dbReference type="InterPro" id="IPR007848">
    <property type="entry name" value="Small_mtfrase_dom"/>
</dbReference>
<dbReference type="InterPro" id="IPR050210">
    <property type="entry name" value="tRNA_Adenine-N(6)_MTase"/>
</dbReference>
<dbReference type="InterPro" id="IPR022882">
    <property type="entry name" value="tRNA_adenine-N6_MeTrfase"/>
</dbReference>
<dbReference type="NCBIfam" id="NF047853">
    <property type="entry name" value="tRm6a37MtseTrmN"/>
    <property type="match status" value="1"/>
</dbReference>
<dbReference type="PANTHER" id="PTHR47739">
    <property type="entry name" value="TRNA1(VAL) (ADENINE(37)-N6)-METHYLTRANSFERASE"/>
    <property type="match status" value="1"/>
</dbReference>
<dbReference type="PANTHER" id="PTHR47739:SF1">
    <property type="entry name" value="TRNA1(VAL) (ADENINE(37)-N6)-METHYLTRANSFERASE"/>
    <property type="match status" value="1"/>
</dbReference>
<dbReference type="Pfam" id="PF05175">
    <property type="entry name" value="MTS"/>
    <property type="match status" value="1"/>
</dbReference>
<dbReference type="SUPFAM" id="SSF53335">
    <property type="entry name" value="S-adenosyl-L-methionine-dependent methyltransferases"/>
    <property type="match status" value="1"/>
</dbReference>
<dbReference type="PROSITE" id="PS00092">
    <property type="entry name" value="N6_MTASE"/>
    <property type="match status" value="1"/>
</dbReference>
<accession>B1IVQ2</accession>
<organism>
    <name type="scientific">Escherichia coli (strain ATCC 8739 / DSM 1576 / NBRC 3972 / NCIMB 8545 / WDCM 00012 / Crooks)</name>
    <dbReference type="NCBI Taxonomy" id="481805"/>
    <lineage>
        <taxon>Bacteria</taxon>
        <taxon>Pseudomonadati</taxon>
        <taxon>Pseudomonadota</taxon>
        <taxon>Gammaproteobacteria</taxon>
        <taxon>Enterobacterales</taxon>
        <taxon>Enterobacteriaceae</taxon>
        <taxon>Escherichia</taxon>
    </lineage>
</organism>
<keyword id="KW-0963">Cytoplasm</keyword>
<keyword id="KW-0489">Methyltransferase</keyword>
<keyword id="KW-0949">S-adenosyl-L-methionine</keyword>
<keyword id="KW-0808">Transferase</keyword>
<keyword id="KW-0819">tRNA processing</keyword>
<protein>
    <recommendedName>
        <fullName evidence="1">tRNA1(Val) (adenine(37)-N6)-methyltransferase</fullName>
        <ecNumber evidence="1">2.1.1.223</ecNumber>
    </recommendedName>
    <alternativeName>
        <fullName evidence="1">tRNA m6A37 methyltransferase</fullName>
    </alternativeName>
</protein>
<proteinExistence type="inferred from homology"/>
<feature type="chain" id="PRO_0000387356" description="tRNA1(Val) (adenine(37)-N6)-methyltransferase">
    <location>
        <begin position="1"/>
        <end position="245"/>
    </location>
</feature>